<gene>
    <name type="primary">CBH-1</name>
</gene>
<protein>
    <recommendedName>
        <fullName>Exoglucanase 1</fullName>
        <ecNumber>3.2.1.91</ecNumber>
    </recommendedName>
    <alternativeName>
        <fullName>1,4-beta-cellobiohydrolase</fullName>
    </alternativeName>
    <alternativeName>
        <fullName>Beta-glucancellobiohydrolase</fullName>
    </alternativeName>
    <alternativeName>
        <fullName>Exocellobiohydrolase I</fullName>
    </alternativeName>
    <alternativeName>
        <fullName>Exoglucanase I</fullName>
    </alternativeName>
</protein>
<dbReference type="EC" id="3.2.1.91"/>
<dbReference type="EMBL" id="X17258">
    <property type="protein sequence ID" value="CAA35159.1"/>
    <property type="molecule type" value="Genomic_DNA"/>
</dbReference>
<dbReference type="PIR" id="S38794">
    <property type="entry name" value="S38794"/>
</dbReference>
<dbReference type="PDB" id="4CSI">
    <property type="method" value="X-ray"/>
    <property type="resolution" value="1.80 A"/>
    <property type="chains" value="A/B=20-457"/>
</dbReference>
<dbReference type="PDBsum" id="4CSI"/>
<dbReference type="SMR" id="P15828"/>
<dbReference type="CAZy" id="CBM1">
    <property type="family name" value="Carbohydrate-Binding Module Family 1"/>
</dbReference>
<dbReference type="CAZy" id="GH7">
    <property type="family name" value="Glycoside Hydrolase Family 7"/>
</dbReference>
<dbReference type="GlyCosmos" id="P15828">
    <property type="glycosylation" value="1 site, No reported glycans"/>
</dbReference>
<dbReference type="BRENDA" id="3.2.1.176">
    <property type="organism ID" value="8357"/>
</dbReference>
<dbReference type="EvolutionaryTrace" id="P15828"/>
<dbReference type="GO" id="GO:0005576">
    <property type="term" value="C:extracellular region"/>
    <property type="evidence" value="ECO:0007669"/>
    <property type="project" value="InterPro"/>
</dbReference>
<dbReference type="GO" id="GO:0016162">
    <property type="term" value="F:cellulose 1,4-beta-cellobiosidase activity"/>
    <property type="evidence" value="ECO:0007669"/>
    <property type="project" value="UniProtKB-EC"/>
</dbReference>
<dbReference type="GO" id="GO:0030248">
    <property type="term" value="F:cellulose binding"/>
    <property type="evidence" value="ECO:0007669"/>
    <property type="project" value="InterPro"/>
</dbReference>
<dbReference type="GO" id="GO:0030245">
    <property type="term" value="P:cellulose catabolic process"/>
    <property type="evidence" value="ECO:0007669"/>
    <property type="project" value="UniProtKB-KW"/>
</dbReference>
<dbReference type="CDD" id="cd07999">
    <property type="entry name" value="GH7_CBH_EG"/>
    <property type="match status" value="1"/>
</dbReference>
<dbReference type="FunFam" id="2.70.100.10:FF:000001">
    <property type="entry name" value="Glucanase"/>
    <property type="match status" value="1"/>
</dbReference>
<dbReference type="Gene3D" id="2.70.100.10">
    <property type="entry name" value="Glycoside hydrolase, family 7, domain"/>
    <property type="match status" value="1"/>
</dbReference>
<dbReference type="InterPro" id="IPR035971">
    <property type="entry name" value="CBD_sf"/>
</dbReference>
<dbReference type="InterPro" id="IPR000254">
    <property type="entry name" value="Cellulose-bd_dom_fun"/>
</dbReference>
<dbReference type="InterPro" id="IPR013320">
    <property type="entry name" value="ConA-like_dom_sf"/>
</dbReference>
<dbReference type="InterPro" id="IPR001722">
    <property type="entry name" value="Glyco_hydro_7"/>
</dbReference>
<dbReference type="InterPro" id="IPR037019">
    <property type="entry name" value="Glyco_hydro_7_sf"/>
</dbReference>
<dbReference type="PANTHER" id="PTHR33753">
    <property type="entry name" value="1,4-BETA-D-GLUCAN CELLOBIOHYDROLASE B"/>
    <property type="match status" value="1"/>
</dbReference>
<dbReference type="PANTHER" id="PTHR33753:SF2">
    <property type="entry name" value="GLYCOSIDE HYDROLASE FAMILY 7 PROTEIN"/>
    <property type="match status" value="1"/>
</dbReference>
<dbReference type="Pfam" id="PF00734">
    <property type="entry name" value="CBM_1"/>
    <property type="match status" value="1"/>
</dbReference>
<dbReference type="Pfam" id="PF00840">
    <property type="entry name" value="Glyco_hydro_7"/>
    <property type="match status" value="1"/>
</dbReference>
<dbReference type="PRINTS" id="PR00734">
    <property type="entry name" value="GLHYDRLASE7"/>
</dbReference>
<dbReference type="SMART" id="SM00236">
    <property type="entry name" value="fCBD"/>
    <property type="match status" value="1"/>
</dbReference>
<dbReference type="SUPFAM" id="SSF57180">
    <property type="entry name" value="Cellulose-binding domain"/>
    <property type="match status" value="1"/>
</dbReference>
<dbReference type="SUPFAM" id="SSF49899">
    <property type="entry name" value="Concanavalin A-like lectins/glucanases"/>
    <property type="match status" value="1"/>
</dbReference>
<dbReference type="PROSITE" id="PS00562">
    <property type="entry name" value="CBM1_1"/>
    <property type="match status" value="1"/>
</dbReference>
<dbReference type="PROSITE" id="PS51164">
    <property type="entry name" value="CBM1_2"/>
    <property type="match status" value="1"/>
</dbReference>
<proteinExistence type="evidence at protein level"/>
<evidence type="ECO:0000250" key="1"/>
<evidence type="ECO:0000255" key="2"/>
<evidence type="ECO:0000255" key="3">
    <source>
        <dbReference type="PROSITE-ProRule" id="PRU00597"/>
    </source>
</evidence>
<evidence type="ECO:0000256" key="4">
    <source>
        <dbReference type="SAM" id="MobiDB-lite"/>
    </source>
</evidence>
<evidence type="ECO:0000305" key="5"/>
<evidence type="ECO:0007829" key="6">
    <source>
        <dbReference type="PDB" id="4CSI"/>
    </source>
</evidence>
<organism>
    <name type="scientific">Humicola insolens</name>
    <name type="common">Soft-rot fungus</name>
    <dbReference type="NCBI Taxonomy" id="85995"/>
    <lineage>
        <taxon>Eukaryota</taxon>
        <taxon>Fungi</taxon>
        <taxon>Dikarya</taxon>
        <taxon>Ascomycota</taxon>
        <taxon>Pezizomycotina</taxon>
        <taxon>Sordariomycetes</taxon>
        <taxon>Sordariomycetidae</taxon>
        <taxon>Sordariales</taxon>
        <taxon>Chaetomiaceae</taxon>
        <taxon>Mycothermus</taxon>
    </lineage>
</organism>
<feature type="signal peptide" evidence="2">
    <location>
        <begin position="1"/>
        <end position="18"/>
    </location>
</feature>
<feature type="chain" id="PRO_0000007921" description="Exoglucanase 1">
    <location>
        <begin position="19"/>
        <end position="525"/>
    </location>
</feature>
<feature type="domain" description="CBM1" evidence="3">
    <location>
        <begin position="489"/>
        <end position="525"/>
    </location>
</feature>
<feature type="region of interest" description="Catalytic">
    <location>
        <begin position="19"/>
        <end position="467"/>
    </location>
</feature>
<feature type="region of interest" description="Disordered" evidence="4">
    <location>
        <begin position="454"/>
        <end position="492"/>
    </location>
</feature>
<feature type="region of interest" description="Linker">
    <location>
        <begin position="468"/>
        <end position="489"/>
    </location>
</feature>
<feature type="compositionally biased region" description="Gly residues" evidence="4">
    <location>
        <begin position="456"/>
        <end position="465"/>
    </location>
</feature>
<feature type="compositionally biased region" description="Low complexity" evidence="4">
    <location>
        <begin position="473"/>
        <end position="489"/>
    </location>
</feature>
<feature type="active site" description="Nucleophile" evidence="1">
    <location>
        <position position="231"/>
    </location>
</feature>
<feature type="active site" description="Proton donor" evidence="1">
    <location>
        <position position="236"/>
    </location>
</feature>
<feature type="glycosylation site" description="N-linked (GlcNAc...) asparagine" evidence="2">
    <location>
        <position position="289"/>
    </location>
</feature>
<feature type="disulfide bond" evidence="1">
    <location>
        <begin position="497"/>
        <end position="514"/>
    </location>
</feature>
<feature type="disulfide bond" evidence="1">
    <location>
        <begin position="508"/>
        <end position="524"/>
    </location>
</feature>
<feature type="strand" evidence="6">
    <location>
        <begin position="31"/>
        <end position="38"/>
    </location>
</feature>
<feature type="turn" evidence="6">
    <location>
        <begin position="39"/>
        <end position="41"/>
    </location>
</feature>
<feature type="strand" evidence="6">
    <location>
        <begin position="42"/>
        <end position="52"/>
    </location>
</feature>
<feature type="helix" evidence="6">
    <location>
        <begin position="54"/>
        <end position="56"/>
    </location>
</feature>
<feature type="strand" evidence="6">
    <location>
        <begin position="59"/>
        <end position="65"/>
    </location>
</feature>
<feature type="strand" evidence="6">
    <location>
        <begin position="67"/>
        <end position="70"/>
    </location>
</feature>
<feature type="turn" evidence="6">
    <location>
        <begin position="76"/>
        <end position="78"/>
    </location>
</feature>
<feature type="helix" evidence="6">
    <location>
        <begin position="82"/>
        <end position="88"/>
    </location>
</feature>
<feature type="strand" evidence="6">
    <location>
        <begin position="89"/>
        <end position="91"/>
    </location>
</feature>
<feature type="helix" evidence="6">
    <location>
        <begin position="96"/>
        <end position="100"/>
    </location>
</feature>
<feature type="strand" evidence="6">
    <location>
        <begin position="102"/>
        <end position="105"/>
    </location>
</feature>
<feature type="strand" evidence="6">
    <location>
        <begin position="108"/>
        <end position="116"/>
    </location>
</feature>
<feature type="strand" evidence="6">
    <location>
        <begin position="121"/>
        <end position="123"/>
    </location>
</feature>
<feature type="strand" evidence="6">
    <location>
        <begin position="125"/>
        <end position="136"/>
    </location>
</feature>
<feature type="strand" evidence="6">
    <location>
        <begin position="144"/>
        <end position="151"/>
    </location>
</feature>
<feature type="strand" evidence="6">
    <location>
        <begin position="159"/>
        <end position="166"/>
    </location>
</feature>
<feature type="turn" evidence="6">
    <location>
        <begin position="170"/>
        <end position="176"/>
    </location>
</feature>
<feature type="helix" evidence="6">
    <location>
        <begin position="184"/>
        <end position="186"/>
    </location>
</feature>
<feature type="strand" evidence="6">
    <location>
        <begin position="200"/>
        <end position="202"/>
    </location>
</feature>
<feature type="strand" evidence="6">
    <location>
        <begin position="224"/>
        <end position="228"/>
    </location>
</feature>
<feature type="strand" evidence="6">
    <location>
        <begin position="231"/>
        <end position="237"/>
    </location>
</feature>
<feature type="strand" evidence="6">
    <location>
        <begin position="242"/>
        <end position="247"/>
    </location>
</feature>
<feature type="strand" evidence="6">
    <location>
        <begin position="249"/>
        <end position="251"/>
    </location>
</feature>
<feature type="strand" evidence="6">
    <location>
        <begin position="255"/>
        <end position="258"/>
    </location>
</feature>
<feature type="helix" evidence="6">
    <location>
        <begin position="259"/>
        <end position="262"/>
    </location>
</feature>
<feature type="strand" evidence="6">
    <location>
        <begin position="265"/>
        <end position="267"/>
    </location>
</feature>
<feature type="turn" evidence="6">
    <location>
        <begin position="268"/>
        <end position="271"/>
    </location>
</feature>
<feature type="strand" evidence="6">
    <location>
        <begin position="273"/>
        <end position="275"/>
    </location>
</feature>
<feature type="turn" evidence="6">
    <location>
        <begin position="284"/>
        <end position="288"/>
    </location>
</feature>
<feature type="strand" evidence="6">
    <location>
        <begin position="292"/>
        <end position="294"/>
    </location>
</feature>
<feature type="strand" evidence="6">
    <location>
        <begin position="297"/>
        <end position="300"/>
    </location>
</feature>
<feature type="strand" evidence="6">
    <location>
        <begin position="305"/>
        <end position="313"/>
    </location>
</feature>
<feature type="strand" evidence="6">
    <location>
        <begin position="317"/>
        <end position="328"/>
    </location>
</feature>
<feature type="strand" evidence="6">
    <location>
        <begin position="331"/>
        <end position="334"/>
    </location>
</feature>
<feature type="strand" evidence="6">
    <location>
        <begin position="346"/>
        <end position="348"/>
    </location>
</feature>
<feature type="helix" evidence="6">
    <location>
        <begin position="350"/>
        <end position="360"/>
    </location>
</feature>
<feature type="helix" evidence="6">
    <location>
        <begin position="365"/>
        <end position="368"/>
    </location>
</feature>
<feature type="helix" evidence="6">
    <location>
        <begin position="371"/>
        <end position="380"/>
    </location>
</feature>
<feature type="strand" evidence="6">
    <location>
        <begin position="383"/>
        <end position="391"/>
    </location>
</feature>
<feature type="turn" evidence="6">
    <location>
        <begin position="393"/>
        <end position="397"/>
    </location>
</feature>
<feature type="helix" evidence="6">
    <location>
        <begin position="398"/>
        <end position="401"/>
    </location>
</feature>
<feature type="strand" evidence="6">
    <location>
        <begin position="402"/>
        <end position="405"/>
    </location>
</feature>
<feature type="helix" evidence="6">
    <location>
        <begin position="406"/>
        <end position="408"/>
    </location>
</feature>
<feature type="turn" evidence="6">
    <location>
        <begin position="412"/>
        <end position="414"/>
    </location>
</feature>
<feature type="helix" evidence="6">
    <location>
        <begin position="426"/>
        <end position="432"/>
    </location>
</feature>
<feature type="strand" evidence="6">
    <location>
        <begin position="437"/>
        <end position="447"/>
    </location>
</feature>
<feature type="strand" evidence="6">
    <location>
        <begin position="450"/>
        <end position="452"/>
    </location>
</feature>
<comment type="function">
    <text>The biological conversion of cellulose to glucose generally requires three types of hydrolytic enzymes: (1) Endoglucanases which cut internal beta-1,4-glucosidic bonds; (2) Exocellobiohydrolases that cut the disaccharide cellobiose from the non-reducing end of the cellulose polymer chain; (3) Beta-1,4-glucosidases which hydrolyze the cellobiose and other short cello-oligosaccharides to glucose.</text>
</comment>
<comment type="catalytic activity">
    <reaction>
        <text>Hydrolysis of (1-&gt;4)-beta-D-glucosidic linkages in cellulose and cellotetraose, releasing cellobiose from the non-reducing ends of the chains.</text>
        <dbReference type="EC" id="3.2.1.91"/>
    </reaction>
</comment>
<comment type="similarity">
    <text evidence="5">Belongs to the glycosyl hydrolase 7 (cellulase C) family.</text>
</comment>
<keyword id="KW-0002">3D-structure</keyword>
<keyword id="KW-0119">Carbohydrate metabolism</keyword>
<keyword id="KW-0136">Cellulose degradation</keyword>
<keyword id="KW-1015">Disulfide bond</keyword>
<keyword id="KW-0325">Glycoprotein</keyword>
<keyword id="KW-0326">Glycosidase</keyword>
<keyword id="KW-0378">Hydrolase</keyword>
<keyword id="KW-0624">Polysaccharide degradation</keyword>
<keyword id="KW-0732">Signal</keyword>
<accession>P15828</accession>
<name>GUX1_HUMIN</name>
<reference key="1">
    <citation type="journal article" date="1990" name="Nucleic Acids Res.">
        <title>Sequence of cbh-1 gene of Humicola grisea var. thermoidea.</title>
        <authorList>
            <person name="de Oliviera Alzevedo M."/>
            <person name="Radford A."/>
        </authorList>
    </citation>
    <scope>NUCLEOTIDE SEQUENCE [GENOMIC DNA]</scope>
</reference>
<sequence length="525" mass="55694">MRTAKFATLAALVASAAAQQACSLTTERHPSLSWNKCTAGGQCQTVQASITLDSNWRWTHQVSGSTNCYTGNKWDTSICTDAKSCAQNCCVDGADYTSTYGITTNGDSLSLKFVTKGQHSTNVGSRTYLMDGEDKYQTFELLGNEFTFDVDVSNIGCGLNGALYFVSMDADGGLSRYPGNKAGAKYGTGYCDAQCPRDIKFINGEANIEGWTGSTNDPNAGAGRYGTCCSEMDIWEANNMATAFTPHPCTIIGQSRCEGDSCGGTYSNERYAGVCDPDGCDFNSYRQGNKTFYGKGMTVDTTKKITVVTQFLKDANGDLGEIKRFYVQDGKIIPNSESTIPGVEGNSITQDWCDRQKVAFGDIDDFNRKGGMKQMGKALAGPMVLVMSIWDDHASNMLWLDSTFPVDAAGKPGAERGACPTTSGVPAEVEAEAPNSNVVFSNIRFGPIGSTVAGLPGAGNGGNNGGNPPPPTTTTSSAPATTTTASAGPKAGRWQQCGGIGFTGPTQCEEPYICTKLNDWYSQCL</sequence>